<organism>
    <name type="scientific">Psychromonas ingrahamii (strain DSM 17664 / CCUG 51855 / 37)</name>
    <dbReference type="NCBI Taxonomy" id="357804"/>
    <lineage>
        <taxon>Bacteria</taxon>
        <taxon>Pseudomonadati</taxon>
        <taxon>Pseudomonadota</taxon>
        <taxon>Gammaproteobacteria</taxon>
        <taxon>Alteromonadales</taxon>
        <taxon>Psychromonadaceae</taxon>
        <taxon>Psychromonas</taxon>
    </lineage>
</organism>
<sequence>MDKRFQLVSQFSPAGDQPQAIEQLINGLKSGLAFQTLLGVTGSGKTFTLANAIAKLNRPTLILAPNKTLAAQLYGEMKEFFPNNAVEYFVSYYDYYQPEAYVPSSDSFIEKDAAINAHIEQMRLSATKALLERKDVVLVASVSAIYGLGDPTAYLQMMLHLTVGEIISSREILQRLVDLQYNRNETELSRGTFRVRGEVIDIFPADSEKEALRIELFDDEVEQISVFDPLTGQGIDKLARVTVYPKTHYVTPREQILKAVDAIKVELNERKKEFLEQNKLLEEQRISQRTLYDIEMMNELGYCSGIENYSRYLSGRSEGQAPPTLFDYLPKDALLIIDESHVTVPQIGAMYKGDRSRKENLVNYGFRLPSALDNRPLKFAEFEKIAPQTIYVSATPSDYEINKSQGEIIRQVIRPTGLLDPVIEVRPVTTQVDDLLSEINIRLPLKERVLVTTLTKRMAEDLTDYLHEHGIKARYLHSDVNTVERVEIIRDLRLGIFDVLIGINLLREGLDIPEVSLVAILDADKEGFLRSERSLIQTMGRAARNLNGKAILYAARITGSMQKAIKVTEDRRELQNKFNIENGIIPQGLSKQVNDVMQLGQKNLKKGNLKQGKVAEYKANYQIHSEQDILKQIALSEKQMFACAKNLEFEKAALFRDEVTKLHEQLVSIG</sequence>
<proteinExistence type="inferred from homology"/>
<accession>A1STV6</accession>
<protein>
    <recommendedName>
        <fullName evidence="1">UvrABC system protein B</fullName>
        <shortName evidence="1">Protein UvrB</shortName>
    </recommendedName>
    <alternativeName>
        <fullName evidence="1">Excinuclease ABC subunit B</fullName>
    </alternativeName>
</protein>
<dbReference type="EMBL" id="CP000510">
    <property type="protein sequence ID" value="ABM02921.1"/>
    <property type="molecule type" value="Genomic_DNA"/>
</dbReference>
<dbReference type="RefSeq" id="WP_011769484.1">
    <property type="nucleotide sequence ID" value="NC_008709.1"/>
</dbReference>
<dbReference type="SMR" id="A1STV6"/>
<dbReference type="STRING" id="357804.Ping_1082"/>
<dbReference type="KEGG" id="pin:Ping_1082"/>
<dbReference type="eggNOG" id="COG0556">
    <property type="taxonomic scope" value="Bacteria"/>
</dbReference>
<dbReference type="HOGENOM" id="CLU_009621_2_1_6"/>
<dbReference type="OrthoDB" id="9806651at2"/>
<dbReference type="Proteomes" id="UP000000639">
    <property type="component" value="Chromosome"/>
</dbReference>
<dbReference type="GO" id="GO:0005737">
    <property type="term" value="C:cytoplasm"/>
    <property type="evidence" value="ECO:0007669"/>
    <property type="project" value="UniProtKB-SubCell"/>
</dbReference>
<dbReference type="GO" id="GO:0009380">
    <property type="term" value="C:excinuclease repair complex"/>
    <property type="evidence" value="ECO:0007669"/>
    <property type="project" value="InterPro"/>
</dbReference>
<dbReference type="GO" id="GO:0005524">
    <property type="term" value="F:ATP binding"/>
    <property type="evidence" value="ECO:0007669"/>
    <property type="project" value="UniProtKB-UniRule"/>
</dbReference>
<dbReference type="GO" id="GO:0016887">
    <property type="term" value="F:ATP hydrolysis activity"/>
    <property type="evidence" value="ECO:0007669"/>
    <property type="project" value="InterPro"/>
</dbReference>
<dbReference type="GO" id="GO:0003677">
    <property type="term" value="F:DNA binding"/>
    <property type="evidence" value="ECO:0007669"/>
    <property type="project" value="UniProtKB-UniRule"/>
</dbReference>
<dbReference type="GO" id="GO:0009381">
    <property type="term" value="F:excinuclease ABC activity"/>
    <property type="evidence" value="ECO:0007669"/>
    <property type="project" value="UniProtKB-UniRule"/>
</dbReference>
<dbReference type="GO" id="GO:0004386">
    <property type="term" value="F:helicase activity"/>
    <property type="evidence" value="ECO:0007669"/>
    <property type="project" value="UniProtKB-KW"/>
</dbReference>
<dbReference type="GO" id="GO:0006289">
    <property type="term" value="P:nucleotide-excision repair"/>
    <property type="evidence" value="ECO:0007669"/>
    <property type="project" value="UniProtKB-UniRule"/>
</dbReference>
<dbReference type="GO" id="GO:0009432">
    <property type="term" value="P:SOS response"/>
    <property type="evidence" value="ECO:0007669"/>
    <property type="project" value="UniProtKB-UniRule"/>
</dbReference>
<dbReference type="CDD" id="cd17916">
    <property type="entry name" value="DEXHc_UvrB"/>
    <property type="match status" value="1"/>
</dbReference>
<dbReference type="CDD" id="cd18790">
    <property type="entry name" value="SF2_C_UvrB"/>
    <property type="match status" value="1"/>
</dbReference>
<dbReference type="FunFam" id="3.40.50.300:FF:000477">
    <property type="entry name" value="UvrABC system protein B"/>
    <property type="match status" value="1"/>
</dbReference>
<dbReference type="Gene3D" id="6.10.140.240">
    <property type="match status" value="1"/>
</dbReference>
<dbReference type="Gene3D" id="3.40.50.300">
    <property type="entry name" value="P-loop containing nucleotide triphosphate hydrolases"/>
    <property type="match status" value="3"/>
</dbReference>
<dbReference type="Gene3D" id="4.10.860.10">
    <property type="entry name" value="UVR domain"/>
    <property type="match status" value="1"/>
</dbReference>
<dbReference type="HAMAP" id="MF_00204">
    <property type="entry name" value="UvrB"/>
    <property type="match status" value="1"/>
</dbReference>
<dbReference type="InterPro" id="IPR006935">
    <property type="entry name" value="Helicase/UvrB_N"/>
</dbReference>
<dbReference type="InterPro" id="IPR014001">
    <property type="entry name" value="Helicase_ATP-bd"/>
</dbReference>
<dbReference type="InterPro" id="IPR001650">
    <property type="entry name" value="Helicase_C-like"/>
</dbReference>
<dbReference type="InterPro" id="IPR027417">
    <property type="entry name" value="P-loop_NTPase"/>
</dbReference>
<dbReference type="InterPro" id="IPR001943">
    <property type="entry name" value="UVR_dom"/>
</dbReference>
<dbReference type="InterPro" id="IPR036876">
    <property type="entry name" value="UVR_dom_sf"/>
</dbReference>
<dbReference type="InterPro" id="IPR004807">
    <property type="entry name" value="UvrB"/>
</dbReference>
<dbReference type="InterPro" id="IPR041471">
    <property type="entry name" value="UvrB_inter"/>
</dbReference>
<dbReference type="InterPro" id="IPR024759">
    <property type="entry name" value="UvrB_YAD/RRR_dom"/>
</dbReference>
<dbReference type="NCBIfam" id="NF003673">
    <property type="entry name" value="PRK05298.1"/>
    <property type="match status" value="1"/>
</dbReference>
<dbReference type="NCBIfam" id="TIGR00631">
    <property type="entry name" value="uvrb"/>
    <property type="match status" value="1"/>
</dbReference>
<dbReference type="PANTHER" id="PTHR24029">
    <property type="entry name" value="UVRABC SYSTEM PROTEIN B"/>
    <property type="match status" value="1"/>
</dbReference>
<dbReference type="PANTHER" id="PTHR24029:SF0">
    <property type="entry name" value="UVRABC SYSTEM PROTEIN B"/>
    <property type="match status" value="1"/>
</dbReference>
<dbReference type="Pfam" id="PF00271">
    <property type="entry name" value="Helicase_C"/>
    <property type="match status" value="1"/>
</dbReference>
<dbReference type="Pfam" id="PF04851">
    <property type="entry name" value="ResIII"/>
    <property type="match status" value="1"/>
</dbReference>
<dbReference type="Pfam" id="PF02151">
    <property type="entry name" value="UVR"/>
    <property type="match status" value="1"/>
</dbReference>
<dbReference type="Pfam" id="PF12344">
    <property type="entry name" value="UvrB"/>
    <property type="match status" value="1"/>
</dbReference>
<dbReference type="Pfam" id="PF17757">
    <property type="entry name" value="UvrB_inter"/>
    <property type="match status" value="1"/>
</dbReference>
<dbReference type="SMART" id="SM00487">
    <property type="entry name" value="DEXDc"/>
    <property type="match status" value="1"/>
</dbReference>
<dbReference type="SMART" id="SM00490">
    <property type="entry name" value="HELICc"/>
    <property type="match status" value="1"/>
</dbReference>
<dbReference type="SUPFAM" id="SSF46600">
    <property type="entry name" value="C-terminal UvrC-binding domain of UvrB"/>
    <property type="match status" value="1"/>
</dbReference>
<dbReference type="SUPFAM" id="SSF52540">
    <property type="entry name" value="P-loop containing nucleoside triphosphate hydrolases"/>
    <property type="match status" value="2"/>
</dbReference>
<dbReference type="PROSITE" id="PS51192">
    <property type="entry name" value="HELICASE_ATP_BIND_1"/>
    <property type="match status" value="1"/>
</dbReference>
<dbReference type="PROSITE" id="PS51194">
    <property type="entry name" value="HELICASE_CTER"/>
    <property type="match status" value="1"/>
</dbReference>
<dbReference type="PROSITE" id="PS50151">
    <property type="entry name" value="UVR"/>
    <property type="match status" value="1"/>
</dbReference>
<feature type="chain" id="PRO_1000077911" description="UvrABC system protein B">
    <location>
        <begin position="1"/>
        <end position="670"/>
    </location>
</feature>
<feature type="domain" description="Helicase ATP-binding" evidence="1">
    <location>
        <begin position="26"/>
        <end position="183"/>
    </location>
</feature>
<feature type="domain" description="Helicase C-terminal" evidence="1">
    <location>
        <begin position="431"/>
        <end position="597"/>
    </location>
</feature>
<feature type="domain" description="UVR" evidence="1">
    <location>
        <begin position="630"/>
        <end position="665"/>
    </location>
</feature>
<feature type="short sequence motif" description="Beta-hairpin">
    <location>
        <begin position="92"/>
        <end position="115"/>
    </location>
</feature>
<feature type="binding site" evidence="1">
    <location>
        <begin position="39"/>
        <end position="46"/>
    </location>
    <ligand>
        <name>ATP</name>
        <dbReference type="ChEBI" id="CHEBI:30616"/>
    </ligand>
</feature>
<gene>
    <name evidence="1" type="primary">uvrB</name>
    <name type="ordered locus">Ping_1082</name>
</gene>
<keyword id="KW-0067">ATP-binding</keyword>
<keyword id="KW-0963">Cytoplasm</keyword>
<keyword id="KW-0227">DNA damage</keyword>
<keyword id="KW-0228">DNA excision</keyword>
<keyword id="KW-0234">DNA repair</keyword>
<keyword id="KW-0267">Excision nuclease</keyword>
<keyword id="KW-0347">Helicase</keyword>
<keyword id="KW-0378">Hydrolase</keyword>
<keyword id="KW-0547">Nucleotide-binding</keyword>
<keyword id="KW-1185">Reference proteome</keyword>
<keyword id="KW-0742">SOS response</keyword>
<evidence type="ECO:0000255" key="1">
    <source>
        <dbReference type="HAMAP-Rule" id="MF_00204"/>
    </source>
</evidence>
<name>UVRB_PSYIN</name>
<comment type="function">
    <text evidence="1">The UvrABC repair system catalyzes the recognition and processing of DNA lesions. A damage recognition complex composed of 2 UvrA and 2 UvrB subunits scans DNA for abnormalities. Upon binding of the UvrA(2)B(2) complex to a putative damaged site, the DNA wraps around one UvrB monomer. DNA wrap is dependent on ATP binding by UvrB and probably causes local melting of the DNA helix, facilitating insertion of UvrB beta-hairpin between the DNA strands. Then UvrB probes one DNA strand for the presence of a lesion. If a lesion is found the UvrA subunits dissociate and the UvrB-DNA preincision complex is formed. This complex is subsequently bound by UvrC and the second UvrB is released. If no lesion is found, the DNA wraps around the other UvrB subunit that will check the other stand for damage.</text>
</comment>
<comment type="subunit">
    <text evidence="1">Forms a heterotetramer with UvrA during the search for lesions. Interacts with UvrC in an incision complex.</text>
</comment>
<comment type="subcellular location">
    <subcellularLocation>
        <location evidence="1">Cytoplasm</location>
    </subcellularLocation>
</comment>
<comment type="domain">
    <text evidence="1">The beta-hairpin motif is involved in DNA binding.</text>
</comment>
<comment type="similarity">
    <text evidence="1">Belongs to the UvrB family.</text>
</comment>
<reference key="1">
    <citation type="journal article" date="2008" name="BMC Genomics">
        <title>Genomics of an extreme psychrophile, Psychromonas ingrahamii.</title>
        <authorList>
            <person name="Riley M."/>
            <person name="Staley J.T."/>
            <person name="Danchin A."/>
            <person name="Wang T.Z."/>
            <person name="Brettin T.S."/>
            <person name="Hauser L.J."/>
            <person name="Land M.L."/>
            <person name="Thompson L.S."/>
        </authorList>
    </citation>
    <scope>NUCLEOTIDE SEQUENCE [LARGE SCALE GENOMIC DNA]</scope>
    <source>
        <strain>DSM 17664 / CCUG 51855 / 37</strain>
    </source>
</reference>